<keyword id="KW-0010">Activator</keyword>
<keyword id="KW-0217">Developmental protein</keyword>
<keyword id="KW-0238">DNA-binding</keyword>
<keyword id="KW-0371">Homeobox</keyword>
<keyword id="KW-0539">Nucleus</keyword>
<keyword id="KW-1185">Reference proteome</keyword>
<keyword id="KW-0804">Transcription</keyword>
<keyword id="KW-0805">Transcription regulation</keyword>
<sequence length="280" mass="29417">MDYSYLNSYDSCVAAMEASAYGDFGACSQPGGFQYSPLRPAFPAAGPPCPALGSSNCALGALRDHQPAPYSAVPYKFFPEPSGLHEKRKQRRIRTTFTSAQLKELERVFAETHYPDIYTREELALKIDLTEARVQVWFQNRRAKFRKQERAASAKGAAGATGAKKGEARCSSEDDDSKESTCSPTPDSTASLPPPPAPSLASPRLSPSPLPAALGSGPGPQPLKGALWAGVAGGGGGGPGTGAAELLKAWQPAEPGPGPFSGVLSSFHRKPGPALKTNLF</sequence>
<gene>
    <name type="primary">Phox2a</name>
    <name type="synonym">Arix</name>
    <name type="synonym">Phox2</name>
    <name type="synonym">Pmx2</name>
    <name type="synonym">Pmx2a</name>
</gene>
<proteinExistence type="evidence at transcript level"/>
<evidence type="ECO:0000250" key="1"/>
<evidence type="ECO:0000255" key="2">
    <source>
        <dbReference type="PROSITE-ProRule" id="PRU00108"/>
    </source>
</evidence>
<evidence type="ECO:0000256" key="3">
    <source>
        <dbReference type="SAM" id="MobiDB-lite"/>
    </source>
</evidence>
<evidence type="ECO:0000305" key="4"/>
<comment type="function">
    <text evidence="1">May be involved in regulating the specificity of expression of the catecholamine biosynthetic genes. Acts as a transcription activator/factor. Could maintain the noradrenergic phenotype (By similarity).</text>
</comment>
<comment type="subcellular location">
    <subcellularLocation>
        <location evidence="2">Nucleus</location>
    </subcellularLocation>
</comment>
<comment type="similarity">
    <text evidence="4">Belongs to the paired homeobox family.</text>
</comment>
<feature type="chain" id="PRO_0000049260" description="Paired mesoderm homeobox protein 2A">
    <location>
        <begin position="1"/>
        <end position="280"/>
    </location>
</feature>
<feature type="DNA-binding region" description="Homeobox" evidence="2">
    <location>
        <begin position="90"/>
        <end position="149"/>
    </location>
</feature>
<feature type="region of interest" description="Disordered" evidence="3">
    <location>
        <begin position="145"/>
        <end position="244"/>
    </location>
</feature>
<feature type="region of interest" description="Disordered" evidence="3">
    <location>
        <begin position="260"/>
        <end position="280"/>
    </location>
</feature>
<feature type="compositionally biased region" description="Low complexity" evidence="3">
    <location>
        <begin position="153"/>
        <end position="163"/>
    </location>
</feature>
<feature type="compositionally biased region" description="Low complexity" evidence="3">
    <location>
        <begin position="199"/>
        <end position="215"/>
    </location>
</feature>
<feature type="compositionally biased region" description="Gly residues" evidence="3">
    <location>
        <begin position="231"/>
        <end position="241"/>
    </location>
</feature>
<dbReference type="EMBL" id="X75014">
    <property type="protein sequence ID" value="CAA52923.1"/>
    <property type="molecule type" value="mRNA"/>
</dbReference>
<dbReference type="CCDS" id="CCDS21514.1"/>
<dbReference type="PIR" id="I48713">
    <property type="entry name" value="I48713"/>
</dbReference>
<dbReference type="RefSeq" id="NP_032913.1">
    <property type="nucleotide sequence ID" value="NM_008887.2"/>
</dbReference>
<dbReference type="SMR" id="Q62066"/>
<dbReference type="FunCoup" id="Q62066">
    <property type="interactions" value="609"/>
</dbReference>
<dbReference type="STRING" id="10090.ENSMUSP00000008090"/>
<dbReference type="iPTMnet" id="Q62066"/>
<dbReference type="PhosphoSitePlus" id="Q62066"/>
<dbReference type="PaxDb" id="10090-ENSMUSP00000008090"/>
<dbReference type="ProteomicsDB" id="288203"/>
<dbReference type="Antibodypedia" id="16943">
    <property type="antibodies" value="205 antibodies from 34 providers"/>
</dbReference>
<dbReference type="DNASU" id="11859"/>
<dbReference type="Ensembl" id="ENSMUST00000008090.11">
    <property type="protein sequence ID" value="ENSMUSP00000008090.9"/>
    <property type="gene ID" value="ENSMUSG00000007946.12"/>
</dbReference>
<dbReference type="GeneID" id="11859"/>
<dbReference type="KEGG" id="mmu:11859"/>
<dbReference type="UCSC" id="uc009ipe.2">
    <property type="organism name" value="mouse"/>
</dbReference>
<dbReference type="AGR" id="MGI:106633"/>
<dbReference type="CTD" id="401"/>
<dbReference type="MGI" id="MGI:106633">
    <property type="gene designation" value="Phox2a"/>
</dbReference>
<dbReference type="VEuPathDB" id="HostDB:ENSMUSG00000007946"/>
<dbReference type="eggNOG" id="KOG0484">
    <property type="taxonomic scope" value="Eukaryota"/>
</dbReference>
<dbReference type="GeneTree" id="ENSGT00940000161147"/>
<dbReference type="HOGENOM" id="CLU_081152_0_0_1"/>
<dbReference type="InParanoid" id="Q62066"/>
<dbReference type="OMA" id="YGDFSPC"/>
<dbReference type="OrthoDB" id="6159439at2759"/>
<dbReference type="PhylomeDB" id="Q62066"/>
<dbReference type="TreeFam" id="TF351612"/>
<dbReference type="BioGRID-ORCS" id="11859">
    <property type="hits" value="3 hits in 77 CRISPR screens"/>
</dbReference>
<dbReference type="PRO" id="PR:Q62066"/>
<dbReference type="Proteomes" id="UP000000589">
    <property type="component" value="Chromosome 7"/>
</dbReference>
<dbReference type="RNAct" id="Q62066">
    <property type="molecule type" value="protein"/>
</dbReference>
<dbReference type="Bgee" id="ENSMUSG00000007946">
    <property type="expression patterns" value="Expressed in superior cervical ganglion and 86 other cell types or tissues"/>
</dbReference>
<dbReference type="GO" id="GO:0000785">
    <property type="term" value="C:chromatin"/>
    <property type="evidence" value="ECO:0007669"/>
    <property type="project" value="Ensembl"/>
</dbReference>
<dbReference type="GO" id="GO:0005634">
    <property type="term" value="C:nucleus"/>
    <property type="evidence" value="ECO:0000314"/>
    <property type="project" value="MGI"/>
</dbReference>
<dbReference type="GO" id="GO:0001228">
    <property type="term" value="F:DNA-binding transcription activator activity, RNA polymerase II-specific"/>
    <property type="evidence" value="ECO:0000314"/>
    <property type="project" value="MGI"/>
</dbReference>
<dbReference type="GO" id="GO:0000977">
    <property type="term" value="F:RNA polymerase II transcription regulatory region sequence-specific DNA binding"/>
    <property type="evidence" value="ECO:0007669"/>
    <property type="project" value="Ensembl"/>
</dbReference>
<dbReference type="GO" id="GO:1990837">
    <property type="term" value="F:sequence-specific double-stranded DNA binding"/>
    <property type="evidence" value="ECO:0000314"/>
    <property type="project" value="MGI"/>
</dbReference>
<dbReference type="GO" id="GO:0021703">
    <property type="term" value="P:locus ceruleus development"/>
    <property type="evidence" value="ECO:0000315"/>
    <property type="project" value="MGI"/>
</dbReference>
<dbReference type="GO" id="GO:0030901">
    <property type="term" value="P:midbrain development"/>
    <property type="evidence" value="ECO:0000315"/>
    <property type="project" value="MGI"/>
</dbReference>
<dbReference type="GO" id="GO:0003357">
    <property type="term" value="P:noradrenergic neuron differentiation"/>
    <property type="evidence" value="ECO:0000315"/>
    <property type="project" value="MGI"/>
</dbReference>
<dbReference type="GO" id="GO:0021623">
    <property type="term" value="P:oculomotor nerve formation"/>
    <property type="evidence" value="ECO:0000315"/>
    <property type="project" value="BHF-UCL"/>
</dbReference>
<dbReference type="GO" id="GO:0048486">
    <property type="term" value="P:parasympathetic nervous system development"/>
    <property type="evidence" value="ECO:0000315"/>
    <property type="project" value="MGI"/>
</dbReference>
<dbReference type="GO" id="GO:0043576">
    <property type="term" value="P:regulation of respiratory gaseous exchange"/>
    <property type="evidence" value="ECO:0000315"/>
    <property type="project" value="MGI"/>
</dbReference>
<dbReference type="GO" id="GO:0006357">
    <property type="term" value="P:regulation of transcription by RNA polymerase II"/>
    <property type="evidence" value="ECO:0000314"/>
    <property type="project" value="MGI"/>
</dbReference>
<dbReference type="GO" id="GO:0021523">
    <property type="term" value="P:somatic motor neuron differentiation"/>
    <property type="evidence" value="ECO:0000315"/>
    <property type="project" value="MGI"/>
</dbReference>
<dbReference type="GO" id="GO:0048485">
    <property type="term" value="P:sympathetic nervous system development"/>
    <property type="evidence" value="ECO:0000315"/>
    <property type="project" value="MGI"/>
</dbReference>
<dbReference type="GO" id="GO:0021642">
    <property type="term" value="P:trochlear nerve formation"/>
    <property type="evidence" value="ECO:0000315"/>
    <property type="project" value="BHF-UCL"/>
</dbReference>
<dbReference type="CDD" id="cd00086">
    <property type="entry name" value="homeodomain"/>
    <property type="match status" value="1"/>
</dbReference>
<dbReference type="FunFam" id="1.10.10.60:FF:000207">
    <property type="entry name" value="paired mesoderm homeobox protein 2A"/>
    <property type="match status" value="1"/>
</dbReference>
<dbReference type="Gene3D" id="1.10.10.60">
    <property type="entry name" value="Homeodomain-like"/>
    <property type="match status" value="1"/>
</dbReference>
<dbReference type="InterPro" id="IPR001356">
    <property type="entry name" value="HD"/>
</dbReference>
<dbReference type="InterPro" id="IPR017970">
    <property type="entry name" value="Homeobox_CS"/>
</dbReference>
<dbReference type="InterPro" id="IPR009057">
    <property type="entry name" value="Homeodomain-like_sf"/>
</dbReference>
<dbReference type="InterPro" id="IPR050649">
    <property type="entry name" value="Paired_Homeobox_TFs"/>
</dbReference>
<dbReference type="PANTHER" id="PTHR24329">
    <property type="entry name" value="HOMEOBOX PROTEIN ARISTALESS"/>
    <property type="match status" value="1"/>
</dbReference>
<dbReference type="PANTHER" id="PTHR24329:SF303">
    <property type="entry name" value="PAIRED MESODERM HOMEOBOX PROTEIN 2A"/>
    <property type="match status" value="1"/>
</dbReference>
<dbReference type="Pfam" id="PF00046">
    <property type="entry name" value="Homeodomain"/>
    <property type="match status" value="1"/>
</dbReference>
<dbReference type="SMART" id="SM00389">
    <property type="entry name" value="HOX"/>
    <property type="match status" value="1"/>
</dbReference>
<dbReference type="SUPFAM" id="SSF46689">
    <property type="entry name" value="Homeodomain-like"/>
    <property type="match status" value="1"/>
</dbReference>
<dbReference type="PROSITE" id="PS00027">
    <property type="entry name" value="HOMEOBOX_1"/>
    <property type="match status" value="1"/>
</dbReference>
<dbReference type="PROSITE" id="PS50071">
    <property type="entry name" value="HOMEOBOX_2"/>
    <property type="match status" value="1"/>
</dbReference>
<reference key="1">
    <citation type="journal article" date="1993" name="Development">
        <title>The mouse homeodomain protein Phox2 regulates Ncam promoter activity in concert with Cux/CDP and is a putative determinant of neurotransmitter phenotype.</title>
        <authorList>
            <person name="Valarche I."/>
            <person name="Tissier-Seta J.-P."/>
            <person name="Hirsch M.R."/>
            <person name="Martinez S."/>
            <person name="Goridis C."/>
            <person name="Brunet J.-F."/>
        </authorList>
    </citation>
    <scope>NUCLEOTIDE SEQUENCE [MRNA]</scope>
    <source>
        <strain>A/J</strain>
    </source>
</reference>
<name>PHX2A_MOUSE</name>
<accession>Q62066</accession>
<protein>
    <recommendedName>
        <fullName>Paired mesoderm homeobox protein 2A</fullName>
    </recommendedName>
    <alternativeName>
        <fullName>Aristaless homeobox protein homolog</fullName>
    </alternativeName>
    <alternativeName>
        <fullName>PHOX2A homeodomain protein</fullName>
    </alternativeName>
    <alternativeName>
        <fullName>Paired-like homeobox 2A</fullName>
    </alternativeName>
</protein>
<organism>
    <name type="scientific">Mus musculus</name>
    <name type="common">Mouse</name>
    <dbReference type="NCBI Taxonomy" id="10090"/>
    <lineage>
        <taxon>Eukaryota</taxon>
        <taxon>Metazoa</taxon>
        <taxon>Chordata</taxon>
        <taxon>Craniata</taxon>
        <taxon>Vertebrata</taxon>
        <taxon>Euteleostomi</taxon>
        <taxon>Mammalia</taxon>
        <taxon>Eutheria</taxon>
        <taxon>Euarchontoglires</taxon>
        <taxon>Glires</taxon>
        <taxon>Rodentia</taxon>
        <taxon>Myomorpha</taxon>
        <taxon>Muroidea</taxon>
        <taxon>Muridae</taxon>
        <taxon>Murinae</taxon>
        <taxon>Mus</taxon>
        <taxon>Mus</taxon>
    </lineage>
</organism>